<dbReference type="EC" id="1.11.1.7"/>
<dbReference type="EMBL" id="D90116">
    <property type="protein sequence ID" value="BAA14144.1"/>
    <property type="molecule type" value="Genomic_DNA"/>
</dbReference>
<dbReference type="PIR" id="JH0150">
    <property type="entry name" value="JH0150"/>
</dbReference>
<dbReference type="SMR" id="P17180"/>
<dbReference type="PeroxiBase" id="56">
    <property type="entry name" value="AruPrx23"/>
</dbReference>
<dbReference type="GlyCosmos" id="P17180">
    <property type="glycosylation" value="3 sites, No reported glycans"/>
</dbReference>
<dbReference type="SABIO-RK" id="P17180"/>
<dbReference type="GO" id="GO:0005576">
    <property type="term" value="C:extracellular region"/>
    <property type="evidence" value="ECO:0007669"/>
    <property type="project" value="UniProtKB-SubCell"/>
</dbReference>
<dbReference type="GO" id="GO:0005773">
    <property type="term" value="C:vacuole"/>
    <property type="evidence" value="ECO:0007669"/>
    <property type="project" value="UniProtKB-SubCell"/>
</dbReference>
<dbReference type="GO" id="GO:0020037">
    <property type="term" value="F:heme binding"/>
    <property type="evidence" value="ECO:0007669"/>
    <property type="project" value="InterPro"/>
</dbReference>
<dbReference type="GO" id="GO:0140825">
    <property type="term" value="F:lactoperoxidase activity"/>
    <property type="evidence" value="ECO:0007669"/>
    <property type="project" value="UniProtKB-EC"/>
</dbReference>
<dbReference type="GO" id="GO:0046872">
    <property type="term" value="F:metal ion binding"/>
    <property type="evidence" value="ECO:0007669"/>
    <property type="project" value="UniProtKB-KW"/>
</dbReference>
<dbReference type="GO" id="GO:0042744">
    <property type="term" value="P:hydrogen peroxide catabolic process"/>
    <property type="evidence" value="ECO:0007669"/>
    <property type="project" value="UniProtKB-KW"/>
</dbReference>
<dbReference type="GO" id="GO:0006979">
    <property type="term" value="P:response to oxidative stress"/>
    <property type="evidence" value="ECO:0007669"/>
    <property type="project" value="InterPro"/>
</dbReference>
<dbReference type="CDD" id="cd00693">
    <property type="entry name" value="secretory_peroxidase"/>
    <property type="match status" value="1"/>
</dbReference>
<dbReference type="FunFam" id="1.10.420.10:FF:000001">
    <property type="entry name" value="Peroxidase"/>
    <property type="match status" value="1"/>
</dbReference>
<dbReference type="FunFam" id="1.10.520.10:FF:000009">
    <property type="entry name" value="Peroxidase"/>
    <property type="match status" value="1"/>
</dbReference>
<dbReference type="Gene3D" id="1.10.520.10">
    <property type="match status" value="1"/>
</dbReference>
<dbReference type="Gene3D" id="1.10.420.10">
    <property type="entry name" value="Peroxidase, domain 2"/>
    <property type="match status" value="1"/>
</dbReference>
<dbReference type="InterPro" id="IPR002016">
    <property type="entry name" value="Haem_peroxidase"/>
</dbReference>
<dbReference type="InterPro" id="IPR010255">
    <property type="entry name" value="Haem_peroxidase_sf"/>
</dbReference>
<dbReference type="InterPro" id="IPR000823">
    <property type="entry name" value="Peroxidase_pln"/>
</dbReference>
<dbReference type="InterPro" id="IPR019794">
    <property type="entry name" value="Peroxidases_AS"/>
</dbReference>
<dbReference type="InterPro" id="IPR019793">
    <property type="entry name" value="Peroxidases_heam-ligand_BS"/>
</dbReference>
<dbReference type="InterPro" id="IPR033905">
    <property type="entry name" value="Secretory_peroxidase"/>
</dbReference>
<dbReference type="PANTHER" id="PTHR31388:SF270">
    <property type="entry name" value="PEROXIDASE 22-RELATED"/>
    <property type="match status" value="1"/>
</dbReference>
<dbReference type="PANTHER" id="PTHR31388">
    <property type="entry name" value="PEROXIDASE 72-RELATED"/>
    <property type="match status" value="1"/>
</dbReference>
<dbReference type="Pfam" id="PF00141">
    <property type="entry name" value="peroxidase"/>
    <property type="match status" value="1"/>
</dbReference>
<dbReference type="PRINTS" id="PR00458">
    <property type="entry name" value="PEROXIDASE"/>
</dbReference>
<dbReference type="PRINTS" id="PR00461">
    <property type="entry name" value="PLPEROXIDASE"/>
</dbReference>
<dbReference type="SUPFAM" id="SSF48113">
    <property type="entry name" value="Heme-dependent peroxidases"/>
    <property type="match status" value="1"/>
</dbReference>
<dbReference type="PROSITE" id="PS00435">
    <property type="entry name" value="PEROXIDASE_1"/>
    <property type="match status" value="1"/>
</dbReference>
<dbReference type="PROSITE" id="PS00436">
    <property type="entry name" value="PEROXIDASE_2"/>
    <property type="match status" value="1"/>
</dbReference>
<dbReference type="PROSITE" id="PS50873">
    <property type="entry name" value="PEROXIDASE_4"/>
    <property type="match status" value="1"/>
</dbReference>
<comment type="function">
    <text>Removal of H(2)O(2), oxidation of toxic reductants, biosynthesis and degradation of lignin, suberization, auxin catabolism, response to environmental stresses such as wounding, pathogen attack and oxidative stress. These functions might be dependent on each isozyme/isoform in each plant tissue.</text>
</comment>
<comment type="catalytic activity">
    <reaction>
        <text>2 a phenolic donor + H2O2 = 2 a phenolic radical donor + 2 H2O</text>
        <dbReference type="Rhea" id="RHEA:56136"/>
        <dbReference type="ChEBI" id="CHEBI:15377"/>
        <dbReference type="ChEBI" id="CHEBI:16240"/>
        <dbReference type="ChEBI" id="CHEBI:139520"/>
        <dbReference type="ChEBI" id="CHEBI:139521"/>
        <dbReference type="EC" id="1.11.1.7"/>
    </reaction>
</comment>
<comment type="cofactor">
    <cofactor>
        <name>Ca(2+)</name>
        <dbReference type="ChEBI" id="CHEBI:29108"/>
    </cofactor>
    <text>Binds 2 calcium ions per subunit.</text>
</comment>
<comment type="cofactor">
    <cofactor>
        <name>heme b</name>
        <dbReference type="ChEBI" id="CHEBI:60344"/>
    </cofactor>
    <text>Binds 1 heme b (iron(II)-protoporphyrin IX) group per subunit.</text>
</comment>
<comment type="subcellular location">
    <subcellularLocation>
        <location evidence="4">Secreted</location>
    </subcellularLocation>
    <subcellularLocation>
        <location evidence="4">Vacuole</location>
    </subcellularLocation>
    <text>Carboxy-terminal extension appears to target the protein to vacuoles.</text>
</comment>
<comment type="similarity">
    <text evidence="2">Belongs to the peroxidase family. Classical plant (class III) peroxidase subfamily.</text>
</comment>
<proteinExistence type="inferred from homology"/>
<name>PER3_ARMRU</name>
<evidence type="ECO:0000255" key="1"/>
<evidence type="ECO:0000255" key="2">
    <source>
        <dbReference type="PROSITE-ProRule" id="PRU00297"/>
    </source>
</evidence>
<evidence type="ECO:0000255" key="3">
    <source>
        <dbReference type="PROSITE-ProRule" id="PRU10012"/>
    </source>
</evidence>
<evidence type="ECO:0000305" key="4"/>
<sequence>MGFSPLISCSAMGALILSCLLLQASNSNAQLRPDFYFRTCPSVFNIIGDIIVDELRTDPRIAASLLRLHFHDCFVRGCDASILLDNSTSFRTEKDAAPNANSARGFGVIDRMKTSLERACPRTVSCADVLTIASQISVLLSGGPWWPVPLGRRDSVEAFFDLANTALPSPFFTLAQLKKAFADVGLNRPSDLVALSGGHTFGRAQCQFVTPRLYNFNGTNRPDPTLDPTYLVQLRALCPQNGNGTVLVNFDVVTPNTFDRQYYTNLRNGKGLIQSDQELFSTPGADTIPLVNLYSSNTFAFFGAFVDAMIRMGNLRPLTGTQGEIRQNCRVVNSRIRGMENDDGVVSSI</sequence>
<gene>
    <name type="primary">PRXC3</name>
</gene>
<accession>P17180</accession>
<reference key="1">
    <citation type="journal article" date="1990" name="Gene">
        <title>Genomic DNA structure of two new horseradish-peroxidase-encoding genes.</title>
        <authorList>
            <person name="Fujiyama K."/>
            <person name="Takemura H."/>
            <person name="Shinmyo A."/>
            <person name="Okada H."/>
            <person name="Takano M."/>
        </authorList>
    </citation>
    <scope>NUCLEOTIDE SEQUENCE [GENOMIC DNA]</scope>
</reference>
<feature type="signal peptide">
    <location>
        <begin position="1"/>
        <end position="29"/>
    </location>
</feature>
<feature type="chain" id="PRO_0000023744" description="Peroxidase C3">
    <location>
        <begin position="30"/>
        <end position="349"/>
    </location>
</feature>
<feature type="active site" description="Proton acceptor" evidence="2 3">
    <location>
        <position position="71"/>
    </location>
</feature>
<feature type="binding site" evidence="2">
    <location>
        <position position="72"/>
    </location>
    <ligand>
        <name>Ca(2+)</name>
        <dbReference type="ChEBI" id="CHEBI:29108"/>
        <label>1</label>
    </ligand>
</feature>
<feature type="binding site" evidence="2">
    <location>
        <position position="75"/>
    </location>
    <ligand>
        <name>Ca(2+)</name>
        <dbReference type="ChEBI" id="CHEBI:29108"/>
        <label>1</label>
    </ligand>
</feature>
<feature type="binding site" evidence="2">
    <location>
        <position position="77"/>
    </location>
    <ligand>
        <name>Ca(2+)</name>
        <dbReference type="ChEBI" id="CHEBI:29108"/>
        <label>1</label>
    </ligand>
</feature>
<feature type="binding site" evidence="2">
    <location>
        <position position="79"/>
    </location>
    <ligand>
        <name>Ca(2+)</name>
        <dbReference type="ChEBI" id="CHEBI:29108"/>
        <label>1</label>
    </ligand>
</feature>
<feature type="binding site" evidence="2">
    <location>
        <position position="81"/>
    </location>
    <ligand>
        <name>Ca(2+)</name>
        <dbReference type="ChEBI" id="CHEBI:29108"/>
        <label>1</label>
    </ligand>
</feature>
<feature type="binding site" evidence="2">
    <location>
        <position position="168"/>
    </location>
    <ligand>
        <name>substrate</name>
    </ligand>
</feature>
<feature type="binding site" description="axial binding residue" evidence="2">
    <location>
        <position position="199"/>
    </location>
    <ligand>
        <name>heme b</name>
        <dbReference type="ChEBI" id="CHEBI:60344"/>
    </ligand>
    <ligandPart>
        <name>Fe</name>
        <dbReference type="ChEBI" id="CHEBI:18248"/>
    </ligandPart>
</feature>
<feature type="binding site" evidence="2">
    <location>
        <position position="200"/>
    </location>
    <ligand>
        <name>Ca(2+)</name>
        <dbReference type="ChEBI" id="CHEBI:29108"/>
        <label>2</label>
    </ligand>
</feature>
<feature type="binding site" evidence="2">
    <location>
        <position position="251"/>
    </location>
    <ligand>
        <name>Ca(2+)</name>
        <dbReference type="ChEBI" id="CHEBI:29108"/>
        <label>2</label>
    </ligand>
</feature>
<feature type="binding site" evidence="2">
    <location>
        <position position="254"/>
    </location>
    <ligand>
        <name>Ca(2+)</name>
        <dbReference type="ChEBI" id="CHEBI:29108"/>
        <label>2</label>
    </ligand>
</feature>
<feature type="binding site" evidence="2">
    <location>
        <position position="259"/>
    </location>
    <ligand>
        <name>Ca(2+)</name>
        <dbReference type="ChEBI" id="CHEBI:29108"/>
        <label>2</label>
    </ligand>
</feature>
<feature type="site" description="Transition state stabilizer" evidence="2">
    <location>
        <position position="67"/>
    </location>
</feature>
<feature type="glycosylation site" description="N-linked (GlcNAc...) asparagine" evidence="1">
    <location>
        <position position="86"/>
    </location>
</feature>
<feature type="glycosylation site" description="N-linked (GlcNAc...) asparagine" evidence="1">
    <location>
        <position position="217"/>
    </location>
</feature>
<feature type="glycosylation site" description="N-linked (GlcNAc...) asparagine" evidence="1">
    <location>
        <position position="243"/>
    </location>
</feature>
<feature type="disulfide bond" evidence="2">
    <location>
        <begin position="40"/>
        <end position="120"/>
    </location>
</feature>
<feature type="disulfide bond" evidence="2">
    <location>
        <begin position="73"/>
        <end position="78"/>
    </location>
</feature>
<feature type="disulfide bond" evidence="2">
    <location>
        <begin position="126"/>
        <end position="329"/>
    </location>
</feature>
<feature type="disulfide bond" evidence="2">
    <location>
        <begin position="206"/>
        <end position="238"/>
    </location>
</feature>
<organism>
    <name type="scientific">Armoracia rusticana</name>
    <name type="common">Horseradish</name>
    <name type="synonym">Armoracia laphatifolia</name>
    <dbReference type="NCBI Taxonomy" id="3704"/>
    <lineage>
        <taxon>Eukaryota</taxon>
        <taxon>Viridiplantae</taxon>
        <taxon>Streptophyta</taxon>
        <taxon>Embryophyta</taxon>
        <taxon>Tracheophyta</taxon>
        <taxon>Spermatophyta</taxon>
        <taxon>Magnoliopsida</taxon>
        <taxon>eudicotyledons</taxon>
        <taxon>Gunneridae</taxon>
        <taxon>Pentapetalae</taxon>
        <taxon>rosids</taxon>
        <taxon>malvids</taxon>
        <taxon>Brassicales</taxon>
        <taxon>Brassicaceae</taxon>
        <taxon>Cardamineae</taxon>
        <taxon>Armoracia</taxon>
    </lineage>
</organism>
<keyword id="KW-0106">Calcium</keyword>
<keyword id="KW-1015">Disulfide bond</keyword>
<keyword id="KW-0325">Glycoprotein</keyword>
<keyword id="KW-0349">Heme</keyword>
<keyword id="KW-0376">Hydrogen peroxide</keyword>
<keyword id="KW-0408">Iron</keyword>
<keyword id="KW-0479">Metal-binding</keyword>
<keyword id="KW-0560">Oxidoreductase</keyword>
<keyword id="KW-0575">Peroxidase</keyword>
<keyword id="KW-0964">Secreted</keyword>
<keyword id="KW-0732">Signal</keyword>
<keyword id="KW-0926">Vacuole</keyword>
<protein>
    <recommendedName>
        <fullName>Peroxidase C3</fullName>
        <ecNumber>1.11.1.7</ecNumber>
    </recommendedName>
</protein>